<organism>
    <name type="scientific">Brucella abortus (strain 2308)</name>
    <dbReference type="NCBI Taxonomy" id="359391"/>
    <lineage>
        <taxon>Bacteria</taxon>
        <taxon>Pseudomonadati</taxon>
        <taxon>Pseudomonadota</taxon>
        <taxon>Alphaproteobacteria</taxon>
        <taxon>Hyphomicrobiales</taxon>
        <taxon>Brucellaceae</taxon>
        <taxon>Brucella/Ochrobactrum group</taxon>
        <taxon>Brucella</taxon>
    </lineage>
</organism>
<gene>
    <name evidence="2" type="primary">trmB</name>
    <name type="ordered locus">BAB1_2161</name>
</gene>
<keyword id="KW-0489">Methyltransferase</keyword>
<keyword id="KW-1185">Reference proteome</keyword>
<keyword id="KW-0949">S-adenosyl-L-methionine</keyword>
<keyword id="KW-0808">Transferase</keyword>
<keyword id="KW-0819">tRNA processing</keyword>
<protein>
    <recommendedName>
        <fullName evidence="2">tRNA (guanine-N(7)-)-methyltransferase</fullName>
        <ecNumber evidence="2">2.1.1.33</ecNumber>
    </recommendedName>
    <alternativeName>
        <fullName evidence="2">tRNA (guanine(46)-N(7))-methyltransferase</fullName>
    </alternativeName>
    <alternativeName>
        <fullName evidence="2">tRNA(m7G46)-methyltransferase</fullName>
    </alternativeName>
</protein>
<reference key="1">
    <citation type="journal article" date="2005" name="Infect. Immun.">
        <title>Whole-genome analyses of speciation events in pathogenic Brucellae.</title>
        <authorList>
            <person name="Chain P.S."/>
            <person name="Comerci D.J."/>
            <person name="Tolmasky M.E."/>
            <person name="Larimer F.W."/>
            <person name="Malfatti S.A."/>
            <person name="Vergez L.M."/>
            <person name="Aguero F."/>
            <person name="Land M.L."/>
            <person name="Ugalde R.A."/>
            <person name="Garcia E."/>
        </authorList>
    </citation>
    <scope>NUCLEOTIDE SEQUENCE [LARGE SCALE GENOMIC DNA]</scope>
    <source>
        <strain>2308</strain>
    </source>
</reference>
<feature type="chain" id="PRO_0000229156" description="tRNA (guanine-N(7)-)-methyltransferase">
    <location>
        <begin position="1"/>
        <end position="233"/>
    </location>
</feature>
<feature type="region of interest" description="Disordered" evidence="3">
    <location>
        <begin position="1"/>
        <end position="22"/>
    </location>
</feature>
<feature type="active site" evidence="1">
    <location>
        <position position="138"/>
    </location>
</feature>
<feature type="binding site" evidence="2">
    <location>
        <position position="64"/>
    </location>
    <ligand>
        <name>S-adenosyl-L-methionine</name>
        <dbReference type="ChEBI" id="CHEBI:59789"/>
    </ligand>
</feature>
<feature type="binding site" evidence="2">
    <location>
        <position position="89"/>
    </location>
    <ligand>
        <name>S-adenosyl-L-methionine</name>
        <dbReference type="ChEBI" id="CHEBI:59789"/>
    </ligand>
</feature>
<feature type="binding site" evidence="2">
    <location>
        <position position="116"/>
    </location>
    <ligand>
        <name>S-adenosyl-L-methionine</name>
        <dbReference type="ChEBI" id="CHEBI:59789"/>
    </ligand>
</feature>
<feature type="binding site" evidence="2">
    <location>
        <position position="138"/>
    </location>
    <ligand>
        <name>S-adenosyl-L-methionine</name>
        <dbReference type="ChEBI" id="CHEBI:59789"/>
    </ligand>
</feature>
<feature type="binding site" evidence="2">
    <location>
        <position position="142"/>
    </location>
    <ligand>
        <name>substrate</name>
    </ligand>
</feature>
<feature type="binding site" evidence="2">
    <location>
        <position position="174"/>
    </location>
    <ligand>
        <name>substrate</name>
    </ligand>
</feature>
<feature type="binding site" evidence="2">
    <location>
        <begin position="212"/>
        <end position="215"/>
    </location>
    <ligand>
        <name>substrate</name>
    </ligand>
</feature>
<proteinExistence type="inferred from homology"/>
<evidence type="ECO:0000250" key="1"/>
<evidence type="ECO:0000255" key="2">
    <source>
        <dbReference type="HAMAP-Rule" id="MF_01057"/>
    </source>
</evidence>
<evidence type="ECO:0000256" key="3">
    <source>
        <dbReference type="SAM" id="MobiDB-lite"/>
    </source>
</evidence>
<dbReference type="EC" id="2.1.1.33" evidence="2"/>
<dbReference type="EMBL" id="AM040264">
    <property type="protein sequence ID" value="CAJ12117.1"/>
    <property type="molecule type" value="Genomic_DNA"/>
</dbReference>
<dbReference type="RefSeq" id="WP_002965223.1">
    <property type="nucleotide sequence ID" value="NZ_KN046823.1"/>
</dbReference>
<dbReference type="SMR" id="Q2YQS1"/>
<dbReference type="STRING" id="359391.BAB1_2161"/>
<dbReference type="KEGG" id="bmf:BAB1_2161"/>
<dbReference type="PATRIC" id="fig|359391.11.peg.1397"/>
<dbReference type="HOGENOM" id="CLU_050910_0_3_5"/>
<dbReference type="PhylomeDB" id="Q2YQS1"/>
<dbReference type="UniPathway" id="UPA00989"/>
<dbReference type="Proteomes" id="UP000002719">
    <property type="component" value="Chromosome I"/>
</dbReference>
<dbReference type="GO" id="GO:0043527">
    <property type="term" value="C:tRNA methyltransferase complex"/>
    <property type="evidence" value="ECO:0007669"/>
    <property type="project" value="TreeGrafter"/>
</dbReference>
<dbReference type="GO" id="GO:0008176">
    <property type="term" value="F:tRNA (guanine(46)-N7)-methyltransferase activity"/>
    <property type="evidence" value="ECO:0007669"/>
    <property type="project" value="UniProtKB-UniRule"/>
</dbReference>
<dbReference type="Gene3D" id="3.40.50.150">
    <property type="entry name" value="Vaccinia Virus protein VP39"/>
    <property type="match status" value="1"/>
</dbReference>
<dbReference type="HAMAP" id="MF_01057">
    <property type="entry name" value="tRNA_methyltr_TrmB"/>
    <property type="match status" value="1"/>
</dbReference>
<dbReference type="InterPro" id="IPR029063">
    <property type="entry name" value="SAM-dependent_MTases_sf"/>
</dbReference>
<dbReference type="InterPro" id="IPR003358">
    <property type="entry name" value="tRNA_(Gua-N-7)_MeTrfase_Trmb"/>
</dbReference>
<dbReference type="InterPro" id="IPR055361">
    <property type="entry name" value="tRNA_methyltr_TrmB_bact"/>
</dbReference>
<dbReference type="PANTHER" id="PTHR23417">
    <property type="entry name" value="3-DEOXY-D-MANNO-OCTULOSONIC-ACID TRANSFERASE/TRNA GUANINE-N 7 - -METHYLTRANSFERASE"/>
    <property type="match status" value="1"/>
</dbReference>
<dbReference type="PANTHER" id="PTHR23417:SF14">
    <property type="entry name" value="PENTACOTRIPEPTIDE-REPEAT REGION OF PRORP DOMAIN-CONTAINING PROTEIN"/>
    <property type="match status" value="1"/>
</dbReference>
<dbReference type="Pfam" id="PF02390">
    <property type="entry name" value="Methyltransf_4"/>
    <property type="match status" value="1"/>
</dbReference>
<dbReference type="SUPFAM" id="SSF53335">
    <property type="entry name" value="S-adenosyl-L-methionine-dependent methyltransferases"/>
    <property type="match status" value="1"/>
</dbReference>
<dbReference type="PROSITE" id="PS51625">
    <property type="entry name" value="SAM_MT_TRMB"/>
    <property type="match status" value="1"/>
</dbReference>
<accession>Q2YQS1</accession>
<name>TRMB_BRUA2</name>
<comment type="function">
    <text evidence="2">Catalyzes the formation of N(7)-methylguanine at position 46 (m7G46) in tRNA.</text>
</comment>
<comment type="catalytic activity">
    <reaction evidence="2">
        <text>guanosine(46) in tRNA + S-adenosyl-L-methionine = N(7)-methylguanosine(46) in tRNA + S-adenosyl-L-homocysteine</text>
        <dbReference type="Rhea" id="RHEA:42708"/>
        <dbReference type="Rhea" id="RHEA-COMP:10188"/>
        <dbReference type="Rhea" id="RHEA-COMP:10189"/>
        <dbReference type="ChEBI" id="CHEBI:57856"/>
        <dbReference type="ChEBI" id="CHEBI:59789"/>
        <dbReference type="ChEBI" id="CHEBI:74269"/>
        <dbReference type="ChEBI" id="CHEBI:74480"/>
        <dbReference type="EC" id="2.1.1.33"/>
    </reaction>
</comment>
<comment type="pathway">
    <text evidence="2">tRNA modification; N(7)-methylguanine-tRNA biosynthesis.</text>
</comment>
<comment type="similarity">
    <text evidence="2">Belongs to the class I-like SAM-binding methyltransferase superfamily. TrmB family.</text>
</comment>
<sequence length="233" mass="26986">MIDENHPMRAAGNFFGRRHGKPLRPHQSNLFEDLLPRLKLDLATPAPQDLRSLFEAPVETVRMEIGFGGGEHLHHESGRYPQSGFIGVEPFINGMAKMLAALDQAPRPNLRLYDEDATAVLDWLPDASLAGIDLFYPDPWHKRRHWKRRFVSDANLDRFARVLKPGAKFRFASDIEHYVNWTLQHCRRHAAFDWQAESPADWNDAYEGWPGTRYEAKAFHEGRRAAYLTFIRR</sequence>